<organism>
    <name type="scientific">Acetivibrio thermocellus (strain ATCC 27405 / DSM 1237 / JCM 9322 / NBRC 103400 / NCIMB 10682 / NRRL B-4536 / VPI 7372)</name>
    <name type="common">Clostridium thermocellum</name>
    <dbReference type="NCBI Taxonomy" id="203119"/>
    <lineage>
        <taxon>Bacteria</taxon>
        <taxon>Bacillati</taxon>
        <taxon>Bacillota</taxon>
        <taxon>Clostridia</taxon>
        <taxon>Eubacteriales</taxon>
        <taxon>Oscillospiraceae</taxon>
        <taxon>Acetivibrio</taxon>
    </lineage>
</organism>
<sequence>MFDIQEELKKLPDKPGVYIMKDENGEIIYVGKAVVLKNRVRQYFQSLSNQTPKVRAMVAHIKEFEYIVTDTELEALILECNLIKKHRPKFNILLKDDKNYPYIKVTMNEDFPRILMTRRVEKDGAKYFGPYTSAYAVRETIDLVKKLFPVKTCSKVLPRDIGKGRPCLNYHIYQCLGPCQGNVSKEEYRFMMQDVCNFLGGRQEDIIKKLEKDMKEAADNLEFERAARIRDKINSLKHIAEKQKIISTAMEDQDVIAFAKSETDSCIQVFFIRGGKLIGREHFILEGTSDVSDSELMTAFVKQFYSSAAYVPGQIILQEDIDEMEIIEKWLSGKRGTKTYIKVPRRGEKLKLVEMVSKNALIELNQFKERIKKEAALAKEGMEKLKELLNLDRLPRRIEAYDISNTGSTEIVGSMVVFENGSPKKSDYRRFKIKSINVQNDYQSMQEVIFRRLKRAQKEMTEKDEGGGKDVGEKGAGFGTLPDVLLVDGGTGHVNAVRSVLEELDFNIPVYGMVKDDNHRTRGLVTGEREFDLSKDIVLLRFVTAIQDEAHRFALEYNRKLRAKRYSGSVLDNIEGVGPKRKKELIRHFGSVKAIKEAEPGEIAKVKGISRDLAQKIYDYFRQQE</sequence>
<accession>A3DJ07</accession>
<name>UVRC_ACET2</name>
<keyword id="KW-0963">Cytoplasm</keyword>
<keyword id="KW-0227">DNA damage</keyword>
<keyword id="KW-0228">DNA excision</keyword>
<keyword id="KW-0234">DNA repair</keyword>
<keyword id="KW-0267">Excision nuclease</keyword>
<keyword id="KW-1185">Reference proteome</keyword>
<keyword id="KW-0742">SOS response</keyword>
<reference key="1">
    <citation type="submission" date="2007-02" db="EMBL/GenBank/DDBJ databases">
        <title>Complete sequence of Clostridium thermocellum ATCC 27405.</title>
        <authorList>
            <consortium name="US DOE Joint Genome Institute"/>
            <person name="Copeland A."/>
            <person name="Lucas S."/>
            <person name="Lapidus A."/>
            <person name="Barry K."/>
            <person name="Detter J.C."/>
            <person name="Glavina del Rio T."/>
            <person name="Hammon N."/>
            <person name="Israni S."/>
            <person name="Dalin E."/>
            <person name="Tice H."/>
            <person name="Pitluck S."/>
            <person name="Chertkov O."/>
            <person name="Brettin T."/>
            <person name="Bruce D."/>
            <person name="Han C."/>
            <person name="Tapia R."/>
            <person name="Gilna P."/>
            <person name="Schmutz J."/>
            <person name="Larimer F."/>
            <person name="Land M."/>
            <person name="Hauser L."/>
            <person name="Kyrpides N."/>
            <person name="Mikhailova N."/>
            <person name="Wu J.H.D."/>
            <person name="Newcomb M."/>
            <person name="Richardson P."/>
        </authorList>
    </citation>
    <scope>NUCLEOTIDE SEQUENCE [LARGE SCALE GENOMIC DNA]</scope>
    <source>
        <strain>ATCC 27405 / DSM 1237 / JCM 9322 / NBRC 103400 / NCIMB 10682 / NRRL B-4536 / VPI 7372</strain>
    </source>
</reference>
<comment type="function">
    <text evidence="1">The UvrABC repair system catalyzes the recognition and processing of DNA lesions. UvrC both incises the 5' and 3' sides of the lesion. The N-terminal half is responsible for the 3' incision and the C-terminal half is responsible for the 5' incision.</text>
</comment>
<comment type="subunit">
    <text evidence="1">Interacts with UvrB in an incision complex.</text>
</comment>
<comment type="subcellular location">
    <subcellularLocation>
        <location evidence="1">Cytoplasm</location>
    </subcellularLocation>
</comment>
<comment type="similarity">
    <text evidence="1">Belongs to the UvrC family.</text>
</comment>
<protein>
    <recommendedName>
        <fullName evidence="1">UvrABC system protein C</fullName>
        <shortName evidence="1">Protein UvrC</shortName>
    </recommendedName>
    <alternativeName>
        <fullName evidence="1">Excinuclease ABC subunit C</fullName>
    </alternativeName>
</protein>
<dbReference type="EMBL" id="CP000568">
    <property type="protein sequence ID" value="ABN53936.1"/>
    <property type="molecule type" value="Genomic_DNA"/>
</dbReference>
<dbReference type="RefSeq" id="WP_003514317.1">
    <property type="nucleotide sequence ID" value="NC_009012.1"/>
</dbReference>
<dbReference type="SMR" id="A3DJ07"/>
<dbReference type="STRING" id="203119.Cthe_2737"/>
<dbReference type="GeneID" id="35805028"/>
<dbReference type="KEGG" id="cth:Cthe_2737"/>
<dbReference type="eggNOG" id="COG0322">
    <property type="taxonomic scope" value="Bacteria"/>
</dbReference>
<dbReference type="HOGENOM" id="CLU_014841_3_2_9"/>
<dbReference type="OrthoDB" id="9804933at2"/>
<dbReference type="Proteomes" id="UP000002145">
    <property type="component" value="Chromosome"/>
</dbReference>
<dbReference type="GO" id="GO:0005737">
    <property type="term" value="C:cytoplasm"/>
    <property type="evidence" value="ECO:0007669"/>
    <property type="project" value="UniProtKB-SubCell"/>
</dbReference>
<dbReference type="GO" id="GO:0009380">
    <property type="term" value="C:excinuclease repair complex"/>
    <property type="evidence" value="ECO:0007669"/>
    <property type="project" value="InterPro"/>
</dbReference>
<dbReference type="GO" id="GO:0003677">
    <property type="term" value="F:DNA binding"/>
    <property type="evidence" value="ECO:0007669"/>
    <property type="project" value="UniProtKB-UniRule"/>
</dbReference>
<dbReference type="GO" id="GO:0009381">
    <property type="term" value="F:excinuclease ABC activity"/>
    <property type="evidence" value="ECO:0007669"/>
    <property type="project" value="UniProtKB-UniRule"/>
</dbReference>
<dbReference type="GO" id="GO:0006289">
    <property type="term" value="P:nucleotide-excision repair"/>
    <property type="evidence" value="ECO:0007669"/>
    <property type="project" value="UniProtKB-UniRule"/>
</dbReference>
<dbReference type="GO" id="GO:0009432">
    <property type="term" value="P:SOS response"/>
    <property type="evidence" value="ECO:0007669"/>
    <property type="project" value="UniProtKB-UniRule"/>
</dbReference>
<dbReference type="CDD" id="cd10434">
    <property type="entry name" value="GIY-YIG_UvrC_Cho"/>
    <property type="match status" value="1"/>
</dbReference>
<dbReference type="FunFam" id="3.40.1440.10:FF:000001">
    <property type="entry name" value="UvrABC system protein C"/>
    <property type="match status" value="1"/>
</dbReference>
<dbReference type="Gene3D" id="1.10.150.20">
    <property type="entry name" value="5' to 3' exonuclease, C-terminal subdomain"/>
    <property type="match status" value="1"/>
</dbReference>
<dbReference type="Gene3D" id="3.40.1440.10">
    <property type="entry name" value="GIY-YIG endonuclease"/>
    <property type="match status" value="1"/>
</dbReference>
<dbReference type="Gene3D" id="4.10.860.10">
    <property type="entry name" value="UVR domain"/>
    <property type="match status" value="1"/>
</dbReference>
<dbReference type="Gene3D" id="3.30.420.340">
    <property type="entry name" value="UvrC, RNAse H endonuclease domain"/>
    <property type="match status" value="1"/>
</dbReference>
<dbReference type="HAMAP" id="MF_00203">
    <property type="entry name" value="UvrC"/>
    <property type="match status" value="1"/>
</dbReference>
<dbReference type="InterPro" id="IPR000305">
    <property type="entry name" value="GIY-YIG_endonuc"/>
</dbReference>
<dbReference type="InterPro" id="IPR035901">
    <property type="entry name" value="GIY-YIG_endonuc_sf"/>
</dbReference>
<dbReference type="InterPro" id="IPR047296">
    <property type="entry name" value="GIY-YIG_UvrC_Cho"/>
</dbReference>
<dbReference type="InterPro" id="IPR003583">
    <property type="entry name" value="Hlx-hairpin-Hlx_DNA-bd_motif"/>
</dbReference>
<dbReference type="InterPro" id="IPR010994">
    <property type="entry name" value="RuvA_2-like"/>
</dbReference>
<dbReference type="InterPro" id="IPR001943">
    <property type="entry name" value="UVR_dom"/>
</dbReference>
<dbReference type="InterPro" id="IPR036876">
    <property type="entry name" value="UVR_dom_sf"/>
</dbReference>
<dbReference type="InterPro" id="IPR050066">
    <property type="entry name" value="UvrABC_protein_C"/>
</dbReference>
<dbReference type="InterPro" id="IPR004791">
    <property type="entry name" value="UvrC"/>
</dbReference>
<dbReference type="InterPro" id="IPR001162">
    <property type="entry name" value="UvrC_RNase_H_dom"/>
</dbReference>
<dbReference type="InterPro" id="IPR038476">
    <property type="entry name" value="UvrC_RNase_H_dom_sf"/>
</dbReference>
<dbReference type="NCBIfam" id="NF001824">
    <property type="entry name" value="PRK00558.1-5"/>
    <property type="match status" value="1"/>
</dbReference>
<dbReference type="NCBIfam" id="TIGR00194">
    <property type="entry name" value="uvrC"/>
    <property type="match status" value="1"/>
</dbReference>
<dbReference type="PANTHER" id="PTHR30562:SF1">
    <property type="entry name" value="UVRABC SYSTEM PROTEIN C"/>
    <property type="match status" value="1"/>
</dbReference>
<dbReference type="PANTHER" id="PTHR30562">
    <property type="entry name" value="UVRC/OXIDOREDUCTASE"/>
    <property type="match status" value="1"/>
</dbReference>
<dbReference type="Pfam" id="PF01541">
    <property type="entry name" value="GIY-YIG"/>
    <property type="match status" value="1"/>
</dbReference>
<dbReference type="Pfam" id="PF14520">
    <property type="entry name" value="HHH_5"/>
    <property type="match status" value="1"/>
</dbReference>
<dbReference type="Pfam" id="PF02151">
    <property type="entry name" value="UVR"/>
    <property type="match status" value="1"/>
</dbReference>
<dbReference type="Pfam" id="PF22920">
    <property type="entry name" value="UvrC_RNaseH"/>
    <property type="match status" value="1"/>
</dbReference>
<dbReference type="Pfam" id="PF08459">
    <property type="entry name" value="UvrC_RNaseH_dom"/>
    <property type="match status" value="1"/>
</dbReference>
<dbReference type="SMART" id="SM00465">
    <property type="entry name" value="GIYc"/>
    <property type="match status" value="1"/>
</dbReference>
<dbReference type="SMART" id="SM00278">
    <property type="entry name" value="HhH1"/>
    <property type="match status" value="2"/>
</dbReference>
<dbReference type="SUPFAM" id="SSF46600">
    <property type="entry name" value="C-terminal UvrC-binding domain of UvrB"/>
    <property type="match status" value="1"/>
</dbReference>
<dbReference type="SUPFAM" id="SSF82771">
    <property type="entry name" value="GIY-YIG endonuclease"/>
    <property type="match status" value="1"/>
</dbReference>
<dbReference type="SUPFAM" id="SSF47781">
    <property type="entry name" value="RuvA domain 2-like"/>
    <property type="match status" value="1"/>
</dbReference>
<dbReference type="PROSITE" id="PS50164">
    <property type="entry name" value="GIY_YIG"/>
    <property type="match status" value="1"/>
</dbReference>
<dbReference type="PROSITE" id="PS50151">
    <property type="entry name" value="UVR"/>
    <property type="match status" value="1"/>
</dbReference>
<dbReference type="PROSITE" id="PS50165">
    <property type="entry name" value="UVRC"/>
    <property type="match status" value="1"/>
</dbReference>
<feature type="chain" id="PRO_1000077775" description="UvrABC system protein C">
    <location>
        <begin position="1"/>
        <end position="625"/>
    </location>
</feature>
<feature type="domain" description="GIY-YIG" evidence="1">
    <location>
        <begin position="13"/>
        <end position="92"/>
    </location>
</feature>
<feature type="domain" description="UVR" evidence="1">
    <location>
        <begin position="204"/>
        <end position="239"/>
    </location>
</feature>
<gene>
    <name evidence="1" type="primary">uvrC</name>
    <name type="ordered locus">Cthe_2737</name>
</gene>
<evidence type="ECO:0000255" key="1">
    <source>
        <dbReference type="HAMAP-Rule" id="MF_00203"/>
    </source>
</evidence>
<proteinExistence type="inferred from homology"/>